<comment type="function">
    <text evidence="1">Acts as an activator of hypoxia-induced mitophagy, an important mechanism for mitochondrial quality control.</text>
</comment>
<comment type="subcellular location">
    <subcellularLocation>
        <location evidence="1">Mitochondrion outer membrane</location>
        <topology evidence="1">Multi-pass membrane protein</topology>
    </subcellularLocation>
</comment>
<comment type="similarity">
    <text evidence="3">Belongs to the FUN14 family.</text>
</comment>
<gene>
    <name type="primary">fundc1</name>
</gene>
<proteinExistence type="evidence at transcript level"/>
<sequence length="151" mass="16675">MAARREPSSDDESYEVLDLTEYARRHHWWNRLFGRNSGPLTEKYSVATQIVMGGVSGWCAGFLFQKVGKLAATAVGGGFLLLQIASHGGYIQIDWKRVEKDVNKAKRKIKKEANKSVPEINTLIEESTDFIKKNIVVSGGFVGGFLLGLAS</sequence>
<protein>
    <recommendedName>
        <fullName>FUN14 domain-containing protein 1</fullName>
    </recommendedName>
</protein>
<reference key="1">
    <citation type="journal article" date="2010" name="Science">
        <title>The genome of the Western clawed frog Xenopus tropicalis.</title>
        <authorList>
            <person name="Hellsten U."/>
            <person name="Harland R.M."/>
            <person name="Gilchrist M.J."/>
            <person name="Hendrix D."/>
            <person name="Jurka J."/>
            <person name="Kapitonov V."/>
            <person name="Ovcharenko I."/>
            <person name="Putnam N.H."/>
            <person name="Shu S."/>
            <person name="Taher L."/>
            <person name="Blitz I.L."/>
            <person name="Blumberg B."/>
            <person name="Dichmann D.S."/>
            <person name="Dubchak I."/>
            <person name="Amaya E."/>
            <person name="Detter J.C."/>
            <person name="Fletcher R."/>
            <person name="Gerhard D.S."/>
            <person name="Goodstein D."/>
            <person name="Graves T."/>
            <person name="Grigoriev I.V."/>
            <person name="Grimwood J."/>
            <person name="Kawashima T."/>
            <person name="Lindquist E."/>
            <person name="Lucas S.M."/>
            <person name="Mead P.E."/>
            <person name="Mitros T."/>
            <person name="Ogino H."/>
            <person name="Ohta Y."/>
            <person name="Poliakov A.V."/>
            <person name="Pollet N."/>
            <person name="Robert J."/>
            <person name="Salamov A."/>
            <person name="Sater A.K."/>
            <person name="Schmutz J."/>
            <person name="Terry A."/>
            <person name="Vize P.D."/>
            <person name="Warren W.C."/>
            <person name="Wells D."/>
            <person name="Wills A."/>
            <person name="Wilson R.K."/>
            <person name="Zimmerman L.B."/>
            <person name="Zorn A.M."/>
            <person name="Grainger R."/>
            <person name="Grammer T."/>
            <person name="Khokha M.K."/>
            <person name="Richardson P.M."/>
            <person name="Rokhsar D.S."/>
        </authorList>
    </citation>
    <scope>NUCLEOTIDE SEQUENCE [LARGE SCALE GENOMIC DNA]</scope>
</reference>
<reference key="2">
    <citation type="submission" date="2008-03" db="EMBL/GenBank/DDBJ databases">
        <authorList>
            <consortium name="NIH - Xenopus Gene Collection (XGC) project"/>
        </authorList>
    </citation>
    <scope>NUCLEOTIDE SEQUENCE [LARGE SCALE MRNA]</scope>
    <source>
        <tissue>Embryo</tissue>
    </source>
</reference>
<evidence type="ECO:0000250" key="1"/>
<evidence type="ECO:0000255" key="2"/>
<evidence type="ECO:0000305" key="3"/>
<dbReference type="EMBL" id="AAMC01015774">
    <property type="status" value="NOT_ANNOTATED_CDS"/>
    <property type="molecule type" value="Genomic_DNA"/>
</dbReference>
<dbReference type="EMBL" id="BC161330">
    <property type="protein sequence ID" value="AAI61330.1"/>
    <property type="molecule type" value="mRNA"/>
</dbReference>
<dbReference type="RefSeq" id="NP_001120476.1">
    <property type="nucleotide sequence ID" value="NM_001127004.1"/>
</dbReference>
<dbReference type="SMR" id="B1H3B1"/>
<dbReference type="FunCoup" id="B1H3B1">
    <property type="interactions" value="117"/>
</dbReference>
<dbReference type="STRING" id="8364.ENSXETP00000022572"/>
<dbReference type="PaxDb" id="8364-ENSXETP00000054793"/>
<dbReference type="GeneID" id="100145592"/>
<dbReference type="KEGG" id="xtr:100145592"/>
<dbReference type="AGR" id="Xenbase:XB-GENE-964323"/>
<dbReference type="CTD" id="139341"/>
<dbReference type="Xenbase" id="XB-GENE-964323">
    <property type="gene designation" value="fundc1"/>
</dbReference>
<dbReference type="eggNOG" id="KOG4099">
    <property type="taxonomic scope" value="Eukaryota"/>
</dbReference>
<dbReference type="HOGENOM" id="CLU_095425_2_0_1"/>
<dbReference type="InParanoid" id="B1H3B1"/>
<dbReference type="OMA" id="NAPPQEY"/>
<dbReference type="OrthoDB" id="163794at2759"/>
<dbReference type="PhylomeDB" id="B1H3B1"/>
<dbReference type="Reactome" id="R-XTR-8934903">
    <property type="pathway name" value="Receptor Mediated Mitophagy"/>
</dbReference>
<dbReference type="Proteomes" id="UP000008143">
    <property type="component" value="Chromosome 2"/>
</dbReference>
<dbReference type="GO" id="GO:0005741">
    <property type="term" value="C:mitochondrial outer membrane"/>
    <property type="evidence" value="ECO:0000250"/>
    <property type="project" value="UniProtKB"/>
</dbReference>
<dbReference type="GO" id="GO:0000422">
    <property type="term" value="P:autophagy of mitochondrion"/>
    <property type="evidence" value="ECO:0000250"/>
    <property type="project" value="UniProtKB"/>
</dbReference>
<dbReference type="GO" id="GO:0001666">
    <property type="term" value="P:response to hypoxia"/>
    <property type="evidence" value="ECO:0000250"/>
    <property type="project" value="UniProtKB"/>
</dbReference>
<dbReference type="InterPro" id="IPR007014">
    <property type="entry name" value="FUN14"/>
</dbReference>
<dbReference type="PANTHER" id="PTHR21346">
    <property type="entry name" value="FUN14 DOMAIN CONTAINING"/>
    <property type="match status" value="1"/>
</dbReference>
<dbReference type="PANTHER" id="PTHR21346:SF2">
    <property type="entry name" value="FUN14 DOMAIN-CONTAINING PROTEIN 1"/>
    <property type="match status" value="1"/>
</dbReference>
<dbReference type="Pfam" id="PF04930">
    <property type="entry name" value="FUN14"/>
    <property type="match status" value="1"/>
</dbReference>
<name>FUND1_XENTR</name>
<keyword id="KW-0072">Autophagy</keyword>
<keyword id="KW-0472">Membrane</keyword>
<keyword id="KW-0496">Mitochondrion</keyword>
<keyword id="KW-1000">Mitochondrion outer membrane</keyword>
<keyword id="KW-1185">Reference proteome</keyword>
<keyword id="KW-0812">Transmembrane</keyword>
<keyword id="KW-1133">Transmembrane helix</keyword>
<organism>
    <name type="scientific">Xenopus tropicalis</name>
    <name type="common">Western clawed frog</name>
    <name type="synonym">Silurana tropicalis</name>
    <dbReference type="NCBI Taxonomy" id="8364"/>
    <lineage>
        <taxon>Eukaryota</taxon>
        <taxon>Metazoa</taxon>
        <taxon>Chordata</taxon>
        <taxon>Craniata</taxon>
        <taxon>Vertebrata</taxon>
        <taxon>Euteleostomi</taxon>
        <taxon>Amphibia</taxon>
        <taxon>Batrachia</taxon>
        <taxon>Anura</taxon>
        <taxon>Pipoidea</taxon>
        <taxon>Pipidae</taxon>
        <taxon>Xenopodinae</taxon>
        <taxon>Xenopus</taxon>
        <taxon>Silurana</taxon>
    </lineage>
</organism>
<accession>B1H3B1</accession>
<accession>F6PSK0</accession>
<feature type="chain" id="PRO_0000416278" description="FUN14 domain-containing protein 1">
    <location>
        <begin position="1"/>
        <end position="151"/>
    </location>
</feature>
<feature type="transmembrane region" description="Helical" evidence="2">
    <location>
        <begin position="44"/>
        <end position="64"/>
    </location>
</feature>
<feature type="transmembrane region" description="Helical" evidence="2">
    <location>
        <begin position="71"/>
        <end position="91"/>
    </location>
</feature>
<feature type="transmembrane region" description="Helical" evidence="2">
    <location>
        <begin position="130"/>
        <end position="150"/>
    </location>
</feature>
<feature type="short sequence motif" description="YXXL">
    <location>
        <begin position="14"/>
        <end position="17"/>
    </location>
</feature>